<gene>
    <name evidence="8" type="primary">salp15</name>
</gene>
<comment type="function">
    <text evidence="1 2">Salivary tick protein that downregulates host immune system by binding to both dendritic cells, and CD4(+) T cells. Specifically binds to the CD4 coreceptor on T cells. This interaction prevents the activation of the Src kinase, Lck, and its downstream substrate Zap-70, and results in deficient activation of PLCgamma1, the repression of calcium fluxes triggered by T-cell antigen receptor (TCR) ligation, and a subsequent reduction in interleukin-2 production. This salivary protein also binds to DC-SIGN (CD209) on dendritic cells (DC) and activates the Raf-1 kinase/MEK signaling pathway that results in down-regulating expression of pro-inflammatory cytokines. Furthermore, it inhibits T cell proliferation induced by DCs (By similarity). It also inhibits in vitro keratinocyte inflammation induced by Borrelia burgdorferi or by the major outer surface protein (OspC) of Borrelia. In addition, it downregulates chemokines and monocyte chemoattractant protein 1, as well as several antimicrobial peptides such as defensins, cathelicidin, psoriasin, and RNase 7 (By similarity). Apart from its immunomodulatory activities, it is also associated with protection of Borrelia spirochetes from antibody-mediated killing through its binding to OspC. In vivo, tests on different immune disease animal models show promising therapeutic results, e.g., in inhibiting HIV infection, experimental autoimmune encephalomyelitis, transplantation rejection, and asthma (By similarity).</text>
</comment>
<comment type="subunit">
    <text evidence="2">Interacts with host CD4. Interacts with host DC-SIGN (CD209). Interacts with Borrelia outer surface protein C (OspC).</text>
</comment>
<comment type="subcellular location">
    <subcellularLocation>
        <location evidence="7">Secreted</location>
    </subcellularLocation>
</comment>
<comment type="tissue specificity">
    <text evidence="7">Expressed in salivary glands.</text>
</comment>
<comment type="induction">
    <text evidence="2">By feeding (By similarity). By the presence of Borrelia burgdorferi (By similarity).</text>
</comment>
<comment type="similarity">
    <text evidence="6">Belongs to the salp15 family.</text>
</comment>
<proteinExistence type="evidence at transcript level"/>
<feature type="signal peptide" evidence="3">
    <location>
        <begin position="1"/>
        <end position="21"/>
    </location>
</feature>
<feature type="chain" id="PRO_5015756048" description="Salivary protein 15 Iper-3" evidence="2">
    <location>
        <begin position="22"/>
        <end position="138"/>
    </location>
</feature>
<feature type="region of interest" description="CD4-binding" evidence="2">
    <location>
        <begin position="119"/>
        <end position="138"/>
    </location>
</feature>
<feature type="glycosylation site" description="N-linked (GlcNAc...) asparagine" evidence="4">
    <location>
        <position position="30"/>
    </location>
</feature>
<feature type="glycosylation site" description="N-linked (GlcNAc...) asparagine" evidence="4">
    <location>
        <position position="42"/>
    </location>
</feature>
<feature type="glycosylation site" description="N-linked (GlcNAc...) asparagine" evidence="4">
    <location>
        <position position="68"/>
    </location>
</feature>
<feature type="glycosylation site" description="N-linked (GlcNAc...) asparagine" evidence="4">
    <location>
        <position position="107"/>
    </location>
</feature>
<feature type="glycosylation site" description="N-linked (GlcNAc...) asparagine" evidence="4">
    <location>
        <position position="127"/>
    </location>
</feature>
<reference evidence="8" key="1">
    <citation type="journal article" date="2009" name="J. Med. Entomol.">
        <title>Molecular identification of Salp15, a key salivary gland protein in the transmission of lyme disease spirochetes, from Ixodes persulcatus and Ixodes pacificus (Acari: Ixodidae).</title>
        <authorList>
            <person name="Hojgaard A."/>
            <person name="Biketov S.F."/>
            <person name="Shtannikov A.V."/>
            <person name="Zeidner N.S."/>
            <person name="Piesman J."/>
        </authorList>
    </citation>
    <scope>NUCLEOTIDE SEQUENCE [MRNA]</scope>
    <source>
        <tissue>Salivary gland</tissue>
    </source>
</reference>
<evidence type="ECO:0000250" key="1">
    <source>
        <dbReference type="UniProtKB" id="A8CZZ0"/>
    </source>
</evidence>
<evidence type="ECO:0000250" key="2">
    <source>
        <dbReference type="UniProtKB" id="Q95WZ4"/>
    </source>
</evidence>
<evidence type="ECO:0000255" key="3"/>
<evidence type="ECO:0000255" key="4">
    <source>
        <dbReference type="PROSITE-ProRule" id="PRU00498"/>
    </source>
</evidence>
<evidence type="ECO:0000303" key="5">
    <source>
    </source>
</evidence>
<evidence type="ECO:0000305" key="6"/>
<evidence type="ECO:0000305" key="7">
    <source>
    </source>
</evidence>
<evidence type="ECO:0000312" key="8">
    <source>
        <dbReference type="EMBL" id="ACV32167.1"/>
    </source>
</evidence>
<dbReference type="EMBL" id="GQ221869">
    <property type="protein sequence ID" value="ACV32167.1"/>
    <property type="molecule type" value="mRNA"/>
</dbReference>
<dbReference type="SMR" id="C8BKF3"/>
<dbReference type="GO" id="GO:0005576">
    <property type="term" value="C:extracellular region"/>
    <property type="evidence" value="ECO:0007669"/>
    <property type="project" value="UniProtKB-SubCell"/>
</dbReference>
<dbReference type="InterPro" id="IPR021971">
    <property type="entry name" value="Salp15"/>
</dbReference>
<dbReference type="Pfam" id="PF12115">
    <property type="entry name" value="Salp15"/>
    <property type="match status" value="1"/>
</dbReference>
<name>SP153_IXOPE</name>
<organism>
    <name type="scientific">Ixodes persulcatus</name>
    <name type="common">Taiga tick</name>
    <dbReference type="NCBI Taxonomy" id="34615"/>
    <lineage>
        <taxon>Eukaryota</taxon>
        <taxon>Metazoa</taxon>
        <taxon>Ecdysozoa</taxon>
        <taxon>Arthropoda</taxon>
        <taxon>Chelicerata</taxon>
        <taxon>Arachnida</taxon>
        <taxon>Acari</taxon>
        <taxon>Parasitiformes</taxon>
        <taxon>Ixodida</taxon>
        <taxon>Ixodoidea</taxon>
        <taxon>Ixodidae</taxon>
        <taxon>Ixodinae</taxon>
        <taxon>Ixodes</taxon>
    </lineage>
</organism>
<protein>
    <recommendedName>
        <fullName evidence="5">Salivary protein 15 Iper-3</fullName>
        <shortName evidence="5">Salp15 Iper-3</shortName>
    </recommendedName>
    <alternativeName>
        <fullName evidence="6">Salp15-like</fullName>
    </alternativeName>
</protein>
<keyword id="KW-0325">Glycoprotein</keyword>
<keyword id="KW-0964">Secreted</keyword>
<keyword id="KW-0732">Signal</keyword>
<sequence>MESFVAMKVVCITVLFVIVAVNESATSEANTSNAAKDTKKTNVTLQFPNYIPNPKQLALKLLEICKNNKSSLNSLTARSSTNYYAINDKYVDFKYYTFLCKHDKDRNVTLNMPPDTPCGPNGQKCANKSQCVGHIPGC</sequence>
<accession>C8BKF3</accession>